<comment type="similarity">
    <text evidence="1">Belongs to the UPF0741 family.</text>
</comment>
<gene>
    <name type="ordered locus">BCAH820_5476</name>
</gene>
<feature type="chain" id="PRO_0000372727" description="UPF0741 protein BCAH820_5476">
    <location>
        <begin position="1"/>
        <end position="74"/>
    </location>
</feature>
<name>Y5476_BACC0</name>
<evidence type="ECO:0000255" key="1">
    <source>
        <dbReference type="HAMAP-Rule" id="MF_01863"/>
    </source>
</evidence>
<reference key="1">
    <citation type="submission" date="2008-10" db="EMBL/GenBank/DDBJ databases">
        <title>Genome sequence of Bacillus cereus AH820.</title>
        <authorList>
            <person name="Dodson R.J."/>
            <person name="Durkin A.S."/>
            <person name="Rosovitz M.J."/>
            <person name="Rasko D.A."/>
            <person name="Hoffmaster A."/>
            <person name="Ravel J."/>
            <person name="Sutton G."/>
        </authorList>
    </citation>
    <scope>NUCLEOTIDE SEQUENCE [LARGE SCALE GENOMIC DNA]</scope>
    <source>
        <strain>AH820</strain>
    </source>
</reference>
<dbReference type="EMBL" id="CP001283">
    <property type="protein sequence ID" value="ACK88758.1"/>
    <property type="molecule type" value="Genomic_DNA"/>
</dbReference>
<dbReference type="RefSeq" id="WP_000526077.1">
    <property type="nucleotide sequence ID" value="NC_011773.1"/>
</dbReference>
<dbReference type="SMR" id="B7JHK6"/>
<dbReference type="KEGG" id="bcu:BCAH820_5476"/>
<dbReference type="HOGENOM" id="CLU_163820_1_0_9"/>
<dbReference type="Proteomes" id="UP000001363">
    <property type="component" value="Chromosome"/>
</dbReference>
<dbReference type="HAMAP" id="MF_01863">
    <property type="entry name" value="UPF0741"/>
    <property type="match status" value="1"/>
</dbReference>
<dbReference type="InterPro" id="IPR009910">
    <property type="entry name" value="DUF1450"/>
</dbReference>
<dbReference type="InterPro" id="IPR020880">
    <property type="entry name" value="UPF0741"/>
</dbReference>
<dbReference type="Pfam" id="PF07293">
    <property type="entry name" value="DUF1450"/>
    <property type="match status" value="1"/>
</dbReference>
<proteinExistence type="inferred from homology"/>
<organism>
    <name type="scientific">Bacillus cereus (strain AH820)</name>
    <dbReference type="NCBI Taxonomy" id="405535"/>
    <lineage>
        <taxon>Bacteria</taxon>
        <taxon>Bacillati</taxon>
        <taxon>Bacillota</taxon>
        <taxon>Bacilli</taxon>
        <taxon>Bacillales</taxon>
        <taxon>Bacillaceae</taxon>
        <taxon>Bacillus</taxon>
        <taxon>Bacillus cereus group</taxon>
    </lineage>
</organism>
<accession>B7JHK6</accession>
<sequence length="74" mass="8132">MGNEFRVCDDCQATNVKTLIPKLKKVDSCATIEVGCQSYCGPGRKKSFAFVNNRPVAAPTEDELIVKIEAKLNK</sequence>
<protein>
    <recommendedName>
        <fullName evidence="1">UPF0741 protein BCAH820_5476</fullName>
    </recommendedName>
</protein>